<name>SURE_VIBCH</name>
<comment type="function">
    <text evidence="1">Nucleotidase that shows phosphatase activity on nucleoside 5'-monophosphates.</text>
</comment>
<comment type="catalytic activity">
    <reaction evidence="1">
        <text>a ribonucleoside 5'-phosphate + H2O = a ribonucleoside + phosphate</text>
        <dbReference type="Rhea" id="RHEA:12484"/>
        <dbReference type="ChEBI" id="CHEBI:15377"/>
        <dbReference type="ChEBI" id="CHEBI:18254"/>
        <dbReference type="ChEBI" id="CHEBI:43474"/>
        <dbReference type="ChEBI" id="CHEBI:58043"/>
        <dbReference type="EC" id="3.1.3.5"/>
    </reaction>
</comment>
<comment type="cofactor">
    <cofactor evidence="1">
        <name>a divalent metal cation</name>
        <dbReference type="ChEBI" id="CHEBI:60240"/>
    </cofactor>
    <text evidence="1">Binds 1 divalent metal cation per subunit.</text>
</comment>
<comment type="subcellular location">
    <subcellularLocation>
        <location evidence="1">Cytoplasm</location>
    </subcellularLocation>
</comment>
<comment type="similarity">
    <text evidence="1">Belongs to the SurE nucleotidase family.</text>
</comment>
<comment type="sequence caution" evidence="2">
    <conflict type="erroneous initiation">
        <sequence resource="EMBL-CDS" id="AAF93699"/>
    </conflict>
</comment>
<dbReference type="EC" id="3.1.3.5" evidence="1"/>
<dbReference type="EMBL" id="AE003852">
    <property type="protein sequence ID" value="AAF93699.1"/>
    <property type="status" value="ALT_INIT"/>
    <property type="molecule type" value="Genomic_DNA"/>
</dbReference>
<dbReference type="PIR" id="F82311">
    <property type="entry name" value="F82311"/>
</dbReference>
<dbReference type="RefSeq" id="NP_230182.1">
    <property type="nucleotide sequence ID" value="NC_002505.1"/>
</dbReference>
<dbReference type="RefSeq" id="WP_000698379.1">
    <property type="nucleotide sequence ID" value="NZ_LT906614.1"/>
</dbReference>
<dbReference type="SMR" id="Q9KUI9"/>
<dbReference type="STRING" id="243277.VC_0531"/>
<dbReference type="DNASU" id="2615200"/>
<dbReference type="EnsemblBacteria" id="AAF93699">
    <property type="protein sequence ID" value="AAF93699"/>
    <property type="gene ID" value="VC_0531"/>
</dbReference>
<dbReference type="GeneID" id="88784096"/>
<dbReference type="KEGG" id="vch:VC_0531"/>
<dbReference type="PATRIC" id="fig|243277.26.peg.507"/>
<dbReference type="eggNOG" id="COG0496">
    <property type="taxonomic scope" value="Bacteria"/>
</dbReference>
<dbReference type="HOGENOM" id="CLU_045192_1_2_6"/>
<dbReference type="Proteomes" id="UP000000584">
    <property type="component" value="Chromosome 1"/>
</dbReference>
<dbReference type="GO" id="GO:0005737">
    <property type="term" value="C:cytoplasm"/>
    <property type="evidence" value="ECO:0007669"/>
    <property type="project" value="UniProtKB-SubCell"/>
</dbReference>
<dbReference type="GO" id="GO:0008254">
    <property type="term" value="F:3'-nucleotidase activity"/>
    <property type="evidence" value="ECO:0000318"/>
    <property type="project" value="GO_Central"/>
</dbReference>
<dbReference type="GO" id="GO:0008253">
    <property type="term" value="F:5'-nucleotidase activity"/>
    <property type="evidence" value="ECO:0000318"/>
    <property type="project" value="GO_Central"/>
</dbReference>
<dbReference type="GO" id="GO:0004309">
    <property type="term" value="F:exopolyphosphatase activity"/>
    <property type="evidence" value="ECO:0000318"/>
    <property type="project" value="GO_Central"/>
</dbReference>
<dbReference type="GO" id="GO:0046872">
    <property type="term" value="F:metal ion binding"/>
    <property type="evidence" value="ECO:0007669"/>
    <property type="project" value="UniProtKB-UniRule"/>
</dbReference>
<dbReference type="GO" id="GO:0000166">
    <property type="term" value="F:nucleotide binding"/>
    <property type="evidence" value="ECO:0007669"/>
    <property type="project" value="UniProtKB-KW"/>
</dbReference>
<dbReference type="FunFam" id="3.40.1210.10:FF:000001">
    <property type="entry name" value="5'/3'-nucleotidase SurE"/>
    <property type="match status" value="1"/>
</dbReference>
<dbReference type="Gene3D" id="3.40.1210.10">
    <property type="entry name" value="Survival protein SurE-like phosphatase/nucleotidase"/>
    <property type="match status" value="1"/>
</dbReference>
<dbReference type="HAMAP" id="MF_00060">
    <property type="entry name" value="SurE"/>
    <property type="match status" value="1"/>
</dbReference>
<dbReference type="InterPro" id="IPR030048">
    <property type="entry name" value="SurE"/>
</dbReference>
<dbReference type="InterPro" id="IPR002828">
    <property type="entry name" value="SurE-like_Pase/nucleotidase"/>
</dbReference>
<dbReference type="InterPro" id="IPR036523">
    <property type="entry name" value="SurE-like_sf"/>
</dbReference>
<dbReference type="NCBIfam" id="NF001489">
    <property type="entry name" value="PRK00346.1-3"/>
    <property type="match status" value="1"/>
</dbReference>
<dbReference type="NCBIfam" id="NF001490">
    <property type="entry name" value="PRK00346.1-4"/>
    <property type="match status" value="1"/>
</dbReference>
<dbReference type="NCBIfam" id="TIGR00087">
    <property type="entry name" value="surE"/>
    <property type="match status" value="1"/>
</dbReference>
<dbReference type="PANTHER" id="PTHR30457">
    <property type="entry name" value="5'-NUCLEOTIDASE SURE"/>
    <property type="match status" value="1"/>
</dbReference>
<dbReference type="PANTHER" id="PTHR30457:SF12">
    <property type="entry name" value="5'_3'-NUCLEOTIDASE SURE"/>
    <property type="match status" value="1"/>
</dbReference>
<dbReference type="Pfam" id="PF01975">
    <property type="entry name" value="SurE"/>
    <property type="match status" value="1"/>
</dbReference>
<dbReference type="SUPFAM" id="SSF64167">
    <property type="entry name" value="SurE-like"/>
    <property type="match status" value="1"/>
</dbReference>
<feature type="chain" id="PRO_0000111849" description="5'-nucleotidase SurE">
    <location>
        <begin position="1"/>
        <end position="250"/>
    </location>
</feature>
<feature type="binding site" evidence="1">
    <location>
        <position position="8"/>
    </location>
    <ligand>
        <name>a divalent metal cation</name>
        <dbReference type="ChEBI" id="CHEBI:60240"/>
    </ligand>
</feature>
<feature type="binding site" evidence="1">
    <location>
        <position position="9"/>
    </location>
    <ligand>
        <name>a divalent metal cation</name>
        <dbReference type="ChEBI" id="CHEBI:60240"/>
    </ligand>
</feature>
<feature type="binding site" evidence="1">
    <location>
        <position position="39"/>
    </location>
    <ligand>
        <name>a divalent metal cation</name>
        <dbReference type="ChEBI" id="CHEBI:60240"/>
    </ligand>
</feature>
<feature type="binding site" evidence="1">
    <location>
        <position position="92"/>
    </location>
    <ligand>
        <name>a divalent metal cation</name>
        <dbReference type="ChEBI" id="CHEBI:60240"/>
    </ligand>
</feature>
<reference key="1">
    <citation type="journal article" date="2000" name="Nature">
        <title>DNA sequence of both chromosomes of the cholera pathogen Vibrio cholerae.</title>
        <authorList>
            <person name="Heidelberg J.F."/>
            <person name="Eisen J.A."/>
            <person name="Nelson W.C."/>
            <person name="Clayton R.A."/>
            <person name="Gwinn M.L."/>
            <person name="Dodson R.J."/>
            <person name="Haft D.H."/>
            <person name="Hickey E.K."/>
            <person name="Peterson J.D."/>
            <person name="Umayam L.A."/>
            <person name="Gill S.R."/>
            <person name="Nelson K.E."/>
            <person name="Read T.D."/>
            <person name="Tettelin H."/>
            <person name="Richardson D.L."/>
            <person name="Ermolaeva M.D."/>
            <person name="Vamathevan J.J."/>
            <person name="Bass S."/>
            <person name="Qin H."/>
            <person name="Dragoi I."/>
            <person name="Sellers P."/>
            <person name="McDonald L.A."/>
            <person name="Utterback T.R."/>
            <person name="Fleischmann R.D."/>
            <person name="Nierman W.C."/>
            <person name="White O."/>
            <person name="Salzberg S.L."/>
            <person name="Smith H.O."/>
            <person name="Colwell R.R."/>
            <person name="Mekalanos J.J."/>
            <person name="Venter J.C."/>
            <person name="Fraser C.M."/>
        </authorList>
    </citation>
    <scope>NUCLEOTIDE SEQUENCE [LARGE SCALE GENOMIC DNA]</scope>
    <source>
        <strain>ATCC 39315 / El Tor Inaba N16961</strain>
    </source>
</reference>
<keyword id="KW-0963">Cytoplasm</keyword>
<keyword id="KW-0378">Hydrolase</keyword>
<keyword id="KW-0479">Metal-binding</keyword>
<keyword id="KW-0547">Nucleotide-binding</keyword>
<keyword id="KW-1185">Reference proteome</keyword>
<evidence type="ECO:0000255" key="1">
    <source>
        <dbReference type="HAMAP-Rule" id="MF_00060"/>
    </source>
</evidence>
<evidence type="ECO:0000305" key="2"/>
<accession>Q9KUI9</accession>
<protein>
    <recommendedName>
        <fullName evidence="1">5'-nucleotidase SurE</fullName>
        <ecNumber evidence="1">3.1.3.5</ecNumber>
    </recommendedName>
    <alternativeName>
        <fullName evidence="1">Nucleoside 5'-monophosphate phosphohydrolase</fullName>
    </alternativeName>
</protein>
<sequence>MKILLSNDDGVYAQGIHALADALRDLAEIVIVAPDRNRSGASNSLTLEHPLRVSQIAENTYSVQGTPTDCVHFALNELMKDALPDLVLSGINHGANLGDDVLYSGTVAAAMEGHFLGVQSIAFSLAGTTHFASAAHFVRQLVEQHLANPIPTNRLLNVNIPDRPLELIQGIEVTRLGARHHAESMIKQKDPRGHDIYWLGPPGKEQDAGPGTDFHAIERGWVSLTPLQVDLTAHESLRSMDHWLKEKVNG</sequence>
<organism>
    <name type="scientific">Vibrio cholerae serotype O1 (strain ATCC 39315 / El Tor Inaba N16961)</name>
    <dbReference type="NCBI Taxonomy" id="243277"/>
    <lineage>
        <taxon>Bacteria</taxon>
        <taxon>Pseudomonadati</taxon>
        <taxon>Pseudomonadota</taxon>
        <taxon>Gammaproteobacteria</taxon>
        <taxon>Vibrionales</taxon>
        <taxon>Vibrionaceae</taxon>
        <taxon>Vibrio</taxon>
    </lineage>
</organism>
<gene>
    <name evidence="1" type="primary">surE</name>
    <name type="ordered locus">VC_0531</name>
</gene>
<proteinExistence type="inferred from homology"/>